<proteinExistence type="evidence at transcript level"/>
<accession>O42392</accession>
<organism>
    <name type="scientific">Gallus gallus</name>
    <name type="common">Chicken</name>
    <dbReference type="NCBI Taxonomy" id="9031"/>
    <lineage>
        <taxon>Eukaryota</taxon>
        <taxon>Metazoa</taxon>
        <taxon>Chordata</taxon>
        <taxon>Craniata</taxon>
        <taxon>Vertebrata</taxon>
        <taxon>Euteleostomi</taxon>
        <taxon>Archelosauria</taxon>
        <taxon>Archosauria</taxon>
        <taxon>Dinosauria</taxon>
        <taxon>Saurischia</taxon>
        <taxon>Theropoda</taxon>
        <taxon>Coelurosauria</taxon>
        <taxon>Aves</taxon>
        <taxon>Neognathae</taxon>
        <taxon>Galloanserae</taxon>
        <taxon>Galliformes</taxon>
        <taxon>Phasianidae</taxon>
        <taxon>Phasianinae</taxon>
        <taxon>Gallus</taxon>
    </lineage>
</organism>
<keyword id="KW-0024">Alternative initiation</keyword>
<keyword id="KW-0963">Cytoplasm</keyword>
<keyword id="KW-0238">DNA-binding</keyword>
<keyword id="KW-0479">Metal-binding</keyword>
<keyword id="KW-0539">Nucleus</keyword>
<keyword id="KW-0675">Receptor</keyword>
<keyword id="KW-1185">Reference proteome</keyword>
<keyword id="KW-0804">Transcription</keyword>
<keyword id="KW-0805">Transcription regulation</keyword>
<keyword id="KW-0862">Zinc</keyword>
<keyword id="KW-0863">Zinc-finger</keyword>
<reference key="1">
    <citation type="journal article" date="1997" name="Arch. Biochem. Biophys.">
        <title>Cloning and origin of the two forms of chicken vitamin D receptor.</title>
        <authorList>
            <person name="Lu Z."/>
            <person name="Hanson K."/>
            <person name="Deluca H.F."/>
        </authorList>
    </citation>
    <scope>NUCLEOTIDE SEQUENCE [MRNA] (ISOFORMS A AND B)</scope>
    <source>
        <strain>Leghorn</strain>
        <tissue>Kidney</tissue>
    </source>
</reference>
<reference key="2">
    <citation type="journal article" date="1987" name="Science">
        <title>Molecular cloning of complementary DNA encoding the avian receptor for vitamin D.</title>
        <authorList>
            <person name="McDonnell D.P."/>
            <person name="Mangelsdorf D.J."/>
            <person name="Pike J.W."/>
            <person name="Haussler M.R."/>
            <person name="O'Malley B.W."/>
        </authorList>
    </citation>
    <scope>NUCLEOTIDE SEQUENCE [MRNA] OF 45-114</scope>
</reference>
<comment type="function">
    <text evidence="1 2">Nuclear receptor for calcitriol, the active form of vitamin D3 which mediates the action of this vitamin on cells. Enters the nucleus upon vitamin D3 binding where it forms heterodimers with the retinoid X receptor/RXR. The VDR-RXR heterodimers bind to specific response elements on DNA and activate the transcription of vitamin D3-responsive target genes (By similarity). Plays a central role in calcium homeostasis (By similarity). Also functions as a receptor for the secondary bile acid lithocholic acid (LCA) and its metabolites (By similarity).</text>
</comment>
<comment type="subunit">
    <text evidence="1">Homodimer in the absence of bound vitamin D3. Heterodimer with RXRA after vitamin D3 binding.</text>
</comment>
<comment type="subcellular location">
    <subcellularLocation>
        <location evidence="1 3">Nucleus</location>
    </subcellularLocation>
    <subcellularLocation>
        <location evidence="1">Cytoplasm</location>
    </subcellularLocation>
    <text evidence="1">Localizes mainly to the nucleus. Translocated into the nucleus via both ligand-dependent and ligand-independent pathways; ligand-independent nuclear translocation is mediated by IPO4.</text>
</comment>
<comment type="alternative products">
    <event type="alternative initiation"/>
    <isoform>
        <id>O42392-1</id>
        <name>A</name>
        <sequence type="displayed"/>
    </isoform>
    <isoform>
        <id>O42392-2</id>
        <name>B</name>
        <sequence type="described" ref="VSP_018771"/>
    </isoform>
</comment>
<comment type="tissue specificity">
    <text>Expressed in kidney and intestine.</text>
</comment>
<comment type="domain">
    <text evidence="1">Composed of three domains: a modulating N-terminal domain, a DNA-binding domain and a C-terminal ligand-binding domain.</text>
</comment>
<comment type="domain">
    <text evidence="1">The 9aaTAD motif is a transactivation domain present in a large number of yeast and animal transcription factors.</text>
</comment>
<comment type="similarity">
    <text evidence="6">Belongs to the nuclear hormone receptor family. NR1 subfamily.</text>
</comment>
<feature type="chain" id="PRO_0000019933" description="Vitamin D3 receptor">
    <location>
        <begin position="1"/>
        <end position="451"/>
    </location>
</feature>
<feature type="domain" description="NR LBD" evidence="4">
    <location>
        <begin position="150"/>
        <end position="447"/>
    </location>
</feature>
<feature type="DNA-binding region" description="Nuclear receptor" evidence="3">
    <location>
        <begin position="44"/>
        <end position="112"/>
    </location>
</feature>
<feature type="zinc finger region" description="NR C4-type" evidence="3">
    <location>
        <begin position="47"/>
        <end position="67"/>
    </location>
</feature>
<feature type="zinc finger region" description="NR C4-type" evidence="3">
    <location>
        <begin position="83"/>
        <end position="107"/>
    </location>
</feature>
<feature type="region of interest" description="Hinge" evidence="1">
    <location>
        <begin position="113"/>
        <end position="149"/>
    </location>
</feature>
<feature type="region of interest" description="Hinge" evidence="1">
    <location>
        <begin position="120"/>
        <end position="149"/>
    </location>
</feature>
<feature type="region of interest" description="Interaction with coactivator LXXLL motif" evidence="2">
    <location>
        <begin position="270"/>
        <end position="288"/>
    </location>
</feature>
<feature type="short sequence motif" description="9aaTAD" evidence="1">
    <location>
        <begin position="440"/>
        <end position="448"/>
    </location>
</feature>
<feature type="binding site" evidence="1">
    <location>
        <position position="47"/>
    </location>
    <ligand>
        <name>Zn(2+)</name>
        <dbReference type="ChEBI" id="CHEBI:29105"/>
        <label>1</label>
    </ligand>
</feature>
<feature type="binding site" evidence="1">
    <location>
        <position position="50"/>
    </location>
    <ligand>
        <name>Zn(2+)</name>
        <dbReference type="ChEBI" id="CHEBI:29105"/>
        <label>1</label>
    </ligand>
</feature>
<feature type="binding site" evidence="1">
    <location>
        <position position="64"/>
    </location>
    <ligand>
        <name>Zn(2+)</name>
        <dbReference type="ChEBI" id="CHEBI:29105"/>
        <label>1</label>
    </ligand>
</feature>
<feature type="binding site" evidence="1">
    <location>
        <position position="67"/>
    </location>
    <ligand>
        <name>Zn(2+)</name>
        <dbReference type="ChEBI" id="CHEBI:29105"/>
        <label>1</label>
    </ligand>
</feature>
<feature type="binding site" evidence="1">
    <location>
        <position position="83"/>
    </location>
    <ligand>
        <name>Zn(2+)</name>
        <dbReference type="ChEBI" id="CHEBI:29105"/>
        <label>2</label>
    </ligand>
</feature>
<feature type="binding site" evidence="1">
    <location>
        <position position="89"/>
    </location>
    <ligand>
        <name>Zn(2+)</name>
        <dbReference type="ChEBI" id="CHEBI:29105"/>
        <label>2</label>
    </ligand>
</feature>
<feature type="binding site" evidence="1">
    <location>
        <position position="99"/>
    </location>
    <ligand>
        <name>Zn(2+)</name>
        <dbReference type="ChEBI" id="CHEBI:29105"/>
        <label>2</label>
    </ligand>
</feature>
<feature type="binding site" evidence="1">
    <location>
        <position position="102"/>
    </location>
    <ligand>
        <name>Zn(2+)</name>
        <dbReference type="ChEBI" id="CHEBI:29105"/>
        <label>2</label>
    </ligand>
</feature>
<feature type="binding site" evidence="1">
    <location>
        <position position="261"/>
    </location>
    <ligand>
        <name>calcitriol</name>
        <dbReference type="ChEBI" id="CHEBI:17823"/>
    </ligand>
</feature>
<feature type="binding site" evidence="1">
    <location>
        <position position="298"/>
    </location>
    <ligand>
        <name>calcitriol</name>
        <dbReference type="ChEBI" id="CHEBI:17823"/>
    </ligand>
</feature>
<feature type="binding site" evidence="1">
    <location>
        <position position="302"/>
    </location>
    <ligand>
        <name>calcitriol</name>
        <dbReference type="ChEBI" id="CHEBI:17823"/>
    </ligand>
</feature>
<feature type="binding site" evidence="1">
    <location>
        <position position="329"/>
    </location>
    <ligand>
        <name>calcitriol</name>
        <dbReference type="ChEBI" id="CHEBI:17823"/>
    </ligand>
</feature>
<feature type="binding site" evidence="1">
    <location>
        <position position="421"/>
    </location>
    <ligand>
        <name>calcitriol</name>
        <dbReference type="ChEBI" id="CHEBI:17823"/>
    </ligand>
</feature>
<feature type="splice variant" id="VSP_018771" description="In isoform B." evidence="5">
    <location>
        <position position="14"/>
    </location>
</feature>
<evidence type="ECO:0000250" key="1">
    <source>
        <dbReference type="UniProtKB" id="P11473"/>
    </source>
</evidence>
<evidence type="ECO:0000250" key="2">
    <source>
        <dbReference type="UniProtKB" id="P13053"/>
    </source>
</evidence>
<evidence type="ECO:0000255" key="3">
    <source>
        <dbReference type="PROSITE-ProRule" id="PRU00407"/>
    </source>
</evidence>
<evidence type="ECO:0000255" key="4">
    <source>
        <dbReference type="PROSITE-ProRule" id="PRU01189"/>
    </source>
</evidence>
<evidence type="ECO:0000303" key="5">
    <source>
    </source>
</evidence>
<evidence type="ECO:0000305" key="6"/>
<dbReference type="EMBL" id="AF011356">
    <property type="protein sequence ID" value="AAB62579.1"/>
    <property type="molecule type" value="mRNA"/>
</dbReference>
<dbReference type="PIR" id="A60912">
    <property type="entry name" value="A60912"/>
</dbReference>
<dbReference type="RefSeq" id="NP_990429.1">
    <property type="nucleotide sequence ID" value="NM_205098.1"/>
</dbReference>
<dbReference type="SMR" id="O42392"/>
<dbReference type="BioGRID" id="676260">
    <property type="interactions" value="1"/>
</dbReference>
<dbReference type="FunCoup" id="O42392">
    <property type="interactions" value="310"/>
</dbReference>
<dbReference type="STRING" id="9031.ENSGALP00000071161"/>
<dbReference type="BindingDB" id="O42392"/>
<dbReference type="ChEMBL" id="CHEMBL2353"/>
<dbReference type="DrugCentral" id="O42392"/>
<dbReference type="PaxDb" id="9031-ENSGALP00000043420"/>
<dbReference type="GeneID" id="395988"/>
<dbReference type="KEGG" id="gga:395988"/>
<dbReference type="CTD" id="7421"/>
<dbReference type="VEuPathDB" id="HostDB:geneid_395988"/>
<dbReference type="eggNOG" id="KOG3575">
    <property type="taxonomic scope" value="Eukaryota"/>
</dbReference>
<dbReference type="InParanoid" id="O42392"/>
<dbReference type="OrthoDB" id="6352325at2759"/>
<dbReference type="PhylomeDB" id="O42392"/>
<dbReference type="PRO" id="PR:O42392"/>
<dbReference type="Proteomes" id="UP000000539">
    <property type="component" value="Unassembled WGS sequence"/>
</dbReference>
<dbReference type="GO" id="GO:0005901">
    <property type="term" value="C:caveola"/>
    <property type="evidence" value="ECO:0000314"/>
    <property type="project" value="AgBase"/>
</dbReference>
<dbReference type="GO" id="GO:0005737">
    <property type="term" value="C:cytoplasm"/>
    <property type="evidence" value="ECO:0007669"/>
    <property type="project" value="UniProtKB-SubCell"/>
</dbReference>
<dbReference type="GO" id="GO:0005634">
    <property type="term" value="C:nucleus"/>
    <property type="evidence" value="ECO:0000314"/>
    <property type="project" value="AgBase"/>
</dbReference>
<dbReference type="GO" id="GO:0005886">
    <property type="term" value="C:plasma membrane"/>
    <property type="evidence" value="ECO:0000304"/>
    <property type="project" value="AgBase"/>
</dbReference>
<dbReference type="GO" id="GO:0004879">
    <property type="term" value="F:nuclear receptor activity"/>
    <property type="evidence" value="ECO:0000250"/>
    <property type="project" value="UniProtKB"/>
</dbReference>
<dbReference type="GO" id="GO:0000978">
    <property type="term" value="F:RNA polymerase II cis-regulatory region sequence-specific DNA binding"/>
    <property type="evidence" value="ECO:0000318"/>
    <property type="project" value="GO_Central"/>
</dbReference>
<dbReference type="GO" id="GO:0005499">
    <property type="term" value="F:vitamin D binding"/>
    <property type="evidence" value="ECO:0000314"/>
    <property type="project" value="AgBase"/>
</dbReference>
<dbReference type="GO" id="GO:0008270">
    <property type="term" value="F:zinc ion binding"/>
    <property type="evidence" value="ECO:0007669"/>
    <property type="project" value="UniProtKB-KW"/>
</dbReference>
<dbReference type="GO" id="GO:0006816">
    <property type="term" value="P:calcium ion transport"/>
    <property type="evidence" value="ECO:0000304"/>
    <property type="project" value="AgBase"/>
</dbReference>
<dbReference type="GO" id="GO:0030154">
    <property type="term" value="P:cell differentiation"/>
    <property type="evidence" value="ECO:0000318"/>
    <property type="project" value="GO_Central"/>
</dbReference>
<dbReference type="GO" id="GO:0030522">
    <property type="term" value="P:intracellular receptor signaling pathway"/>
    <property type="evidence" value="ECO:0000318"/>
    <property type="project" value="GO_Central"/>
</dbReference>
<dbReference type="GO" id="GO:0000122">
    <property type="term" value="P:negative regulation of transcription by RNA polymerase II"/>
    <property type="evidence" value="ECO:0000318"/>
    <property type="project" value="GO_Central"/>
</dbReference>
<dbReference type="GO" id="GO:0045944">
    <property type="term" value="P:positive regulation of transcription by RNA polymerase II"/>
    <property type="evidence" value="ECO:0000318"/>
    <property type="project" value="GO_Central"/>
</dbReference>
<dbReference type="GO" id="GO:0033280">
    <property type="term" value="P:response to vitamin D"/>
    <property type="evidence" value="ECO:0000304"/>
    <property type="project" value="AgBase"/>
</dbReference>
<dbReference type="GO" id="GO:0070561">
    <property type="term" value="P:vitamin D receptor signaling pathway"/>
    <property type="evidence" value="ECO:0000250"/>
    <property type="project" value="UniProtKB"/>
</dbReference>
<dbReference type="CDD" id="cd06955">
    <property type="entry name" value="NR_DBD_VDR"/>
    <property type="match status" value="1"/>
</dbReference>
<dbReference type="CDD" id="cd06933">
    <property type="entry name" value="NR_LBD_VDR"/>
    <property type="match status" value="1"/>
</dbReference>
<dbReference type="FunFam" id="3.30.50.10:FF:000023">
    <property type="entry name" value="Vitamin D3 receptor"/>
    <property type="match status" value="1"/>
</dbReference>
<dbReference type="FunFam" id="1.10.565.10:FF:000021">
    <property type="entry name" value="Vitamin D3 receptor B"/>
    <property type="match status" value="1"/>
</dbReference>
<dbReference type="Gene3D" id="3.30.50.10">
    <property type="entry name" value="Erythroid Transcription Factor GATA-1, subunit A"/>
    <property type="match status" value="1"/>
</dbReference>
<dbReference type="Gene3D" id="1.10.565.10">
    <property type="entry name" value="Retinoid X Receptor"/>
    <property type="match status" value="1"/>
</dbReference>
<dbReference type="InterPro" id="IPR042153">
    <property type="entry name" value="DBD_VDR"/>
</dbReference>
<dbReference type="InterPro" id="IPR035500">
    <property type="entry name" value="NHR-like_dom_sf"/>
</dbReference>
<dbReference type="InterPro" id="IPR000536">
    <property type="entry name" value="Nucl_hrmn_rcpt_lig-bd"/>
</dbReference>
<dbReference type="InterPro" id="IPR050234">
    <property type="entry name" value="Nuclear_hormone_rcpt_NR1"/>
</dbReference>
<dbReference type="InterPro" id="IPR001723">
    <property type="entry name" value="Nuclear_hrmn_rcpt"/>
</dbReference>
<dbReference type="InterPro" id="IPR000324">
    <property type="entry name" value="VitD_rcpt"/>
</dbReference>
<dbReference type="InterPro" id="IPR001628">
    <property type="entry name" value="Znf_hrmn_rcpt"/>
</dbReference>
<dbReference type="InterPro" id="IPR013088">
    <property type="entry name" value="Znf_NHR/GATA"/>
</dbReference>
<dbReference type="PANTHER" id="PTHR24082">
    <property type="entry name" value="NUCLEAR HORMONE RECEPTOR"/>
    <property type="match status" value="1"/>
</dbReference>
<dbReference type="PANTHER" id="PTHR24082:SF38">
    <property type="entry name" value="VITAMIN D3 RECEPTOR"/>
    <property type="match status" value="1"/>
</dbReference>
<dbReference type="Pfam" id="PF00104">
    <property type="entry name" value="Hormone_recep"/>
    <property type="match status" value="1"/>
</dbReference>
<dbReference type="Pfam" id="PF00105">
    <property type="entry name" value="zf-C4"/>
    <property type="match status" value="1"/>
</dbReference>
<dbReference type="PRINTS" id="PR00398">
    <property type="entry name" value="STRDHORMONER"/>
</dbReference>
<dbReference type="PRINTS" id="PR00047">
    <property type="entry name" value="STROIDFINGER"/>
</dbReference>
<dbReference type="PRINTS" id="PR00350">
    <property type="entry name" value="VITAMINDR"/>
</dbReference>
<dbReference type="SMART" id="SM00430">
    <property type="entry name" value="HOLI"/>
    <property type="match status" value="1"/>
</dbReference>
<dbReference type="SMART" id="SM00399">
    <property type="entry name" value="ZnF_C4"/>
    <property type="match status" value="1"/>
</dbReference>
<dbReference type="SUPFAM" id="SSF57716">
    <property type="entry name" value="Glucocorticoid receptor-like (DNA-binding domain)"/>
    <property type="match status" value="1"/>
</dbReference>
<dbReference type="SUPFAM" id="SSF48508">
    <property type="entry name" value="Nuclear receptor ligand-binding domain"/>
    <property type="match status" value="1"/>
</dbReference>
<dbReference type="PROSITE" id="PS51843">
    <property type="entry name" value="NR_LBD"/>
    <property type="match status" value="1"/>
</dbReference>
<dbReference type="PROSITE" id="PS00031">
    <property type="entry name" value="NUCLEAR_REC_DBD_1"/>
    <property type="match status" value="1"/>
</dbReference>
<dbReference type="PROSITE" id="PS51030">
    <property type="entry name" value="NUCLEAR_REC_DBD_2"/>
    <property type="match status" value="1"/>
</dbReference>
<gene>
    <name type="primary">VDR</name>
    <name type="synonym">NR1I1</name>
</gene>
<sequence length="451" mass="51300">MSELRGSWDEQQQSMAYLPDADMDTVAASTSLPDPAGDFDRNVPRICGVCGDRATGFHFNAMTCEGCKGFFRRSMKRKAMFTCPFNGDCKITKDNRRHCQACRLKRCVDIGMMKEFILTDEEVQRKREMILKRKEEEALKESLKPKLSEEQQKVIDTLLEAHHKTFDTTYSDFNKFRPPVRSKFSSRMATHSSSVVSQDFSSEDSNDVFGSDAFAAFPEPMEPQMFSNLDLSEESDESPSMNIELPHLPMLPHLADLVSYSIQKVIGFAKMIPGFRDLTAEDQIALLKSSAIEVIMLRSNQSFTMEDMSWTCGSNDFKYKVSDVTQAGHSMDLLEPLVKFQVGLKKLNLHEEEHVLLMAICILSPDRPGVQDTSLVESIQDRLSDILQTYIRCRHPPPGSRLLYAKMIQKLADLRSLNEEHSKQYRCLSFQPEHSMQLTPLVLEVFGNEIS</sequence>
<protein>
    <recommendedName>
        <fullName>Vitamin D3 receptor</fullName>
        <shortName>VDR</shortName>
    </recommendedName>
    <alternativeName>
        <fullName>1,25-dihydroxyvitamin D3 receptor</fullName>
    </alternativeName>
    <alternativeName>
        <fullName>Nuclear receptor subfamily 1 group I member 1</fullName>
    </alternativeName>
</protein>
<name>VDR_CHICK</name>